<sequence>MSAAAASSAAGDSAKQPLLHHQRGNPPHVASVSSPSLPSAPPGALAGGRRFPGGLDVPNLKKRGGGTRSWIRVEAATASVQTLEVDKATMMRRCELPARDLRLLDPLFVYPSTILGRERAIVVNLEQIRCVITADEVLLLNSLDSYVLQYAAELQRRLLQRAEGDELPFEFRALELALEAACSFLDAQAAELEIEAYPLLDELTSKISTLNLERVRRLKSRLVALTRRVQKVRDEIEQLMDDDGDMAEMYLSEKKLRTEASFYGDQSMLGYNSVGDGTSFSAPVSPVSSPTESRKLEKAFSLCRSRHDSVKSSDNTATEHIQELEMLLEAYFVVIDSTLNKLTSLKEYIDDTEDFINIQLDNVRNQLIQFELLLTTATFVVAIFGVVAGIFGMNFETSVFSIQNAFQWVLIITGVIGAFIFCGFLWFFKYKRLMPL</sequence>
<proteinExistence type="evidence at transcript level"/>
<name>MRS2B_ORYSJ</name>
<gene>
    <name type="primary">MRS2-B</name>
    <name type="ordered locus">Os06g0650800</name>
    <name type="ordered locus">LOC_Os06g44150</name>
    <name type="ORF">P0453H04.31</name>
</gene>
<accession>Q67UQ7</accession>
<accession>A0A0P0WZR6</accession>
<keyword id="KW-0175">Coiled coil</keyword>
<keyword id="KW-0406">Ion transport</keyword>
<keyword id="KW-0460">Magnesium</keyword>
<keyword id="KW-0472">Membrane</keyword>
<keyword id="KW-1185">Reference proteome</keyword>
<keyword id="KW-0812">Transmembrane</keyword>
<keyword id="KW-1133">Transmembrane helix</keyword>
<keyword id="KW-0813">Transport</keyword>
<reference key="1">
    <citation type="journal article" date="2005" name="Nature">
        <title>The map-based sequence of the rice genome.</title>
        <authorList>
            <consortium name="International rice genome sequencing project (IRGSP)"/>
        </authorList>
    </citation>
    <scope>NUCLEOTIDE SEQUENCE [LARGE SCALE GENOMIC DNA]</scope>
    <source>
        <strain>cv. Nipponbare</strain>
    </source>
</reference>
<reference key="2">
    <citation type="journal article" date="2008" name="Nucleic Acids Res.">
        <title>The rice annotation project database (RAP-DB): 2008 update.</title>
        <authorList>
            <consortium name="The rice annotation project (RAP)"/>
        </authorList>
    </citation>
    <scope>GENOME REANNOTATION</scope>
    <source>
        <strain>cv. Nipponbare</strain>
    </source>
</reference>
<reference key="3">
    <citation type="journal article" date="2013" name="Rice">
        <title>Improvement of the Oryza sativa Nipponbare reference genome using next generation sequence and optical map data.</title>
        <authorList>
            <person name="Kawahara Y."/>
            <person name="de la Bastide M."/>
            <person name="Hamilton J.P."/>
            <person name="Kanamori H."/>
            <person name="McCombie W.R."/>
            <person name="Ouyang S."/>
            <person name="Schwartz D.C."/>
            <person name="Tanaka T."/>
            <person name="Wu J."/>
            <person name="Zhou S."/>
            <person name="Childs K.L."/>
            <person name="Davidson R.M."/>
            <person name="Lin H."/>
            <person name="Quesada-Ocampo L."/>
            <person name="Vaillancourt B."/>
            <person name="Sakai H."/>
            <person name="Lee S.S."/>
            <person name="Kim J."/>
            <person name="Numa H."/>
            <person name="Itoh T."/>
            <person name="Buell C.R."/>
            <person name="Matsumoto T."/>
        </authorList>
    </citation>
    <scope>GENOME REANNOTATION</scope>
    <source>
        <strain>cv. Nipponbare</strain>
    </source>
</reference>
<reference key="4">
    <citation type="journal article" date="2003" name="Science">
        <title>Collection, mapping, and annotation of over 28,000 cDNA clones from japonica rice.</title>
        <authorList>
            <consortium name="The rice full-length cDNA consortium"/>
        </authorList>
    </citation>
    <scope>NUCLEOTIDE SEQUENCE [LARGE SCALE MRNA]</scope>
    <source>
        <strain>cv. Nipponbare</strain>
    </source>
</reference>
<reference key="5">
    <citation type="journal article" date="2009" name="Plant Cell">
        <title>A root-expressed magnesium transporter of the MRS2/MGT gene family in Arabidopsis thaliana allows for growth in low-Mg2+ environments.</title>
        <authorList>
            <person name="Gebert M."/>
            <person name="Meschenmoser K."/>
            <person name="Svidova S."/>
            <person name="Weghuber J."/>
            <person name="Schweyen R."/>
            <person name="Eifler K."/>
            <person name="Lenz H."/>
            <person name="Weyand K."/>
            <person name="Knoop V."/>
        </authorList>
    </citation>
    <scope>GENE FAMILY</scope>
</reference>
<feature type="chain" id="PRO_0000394267" description="Magnesium transporter MRS2-B">
    <location>
        <begin position="1"/>
        <end position="436"/>
    </location>
</feature>
<feature type="transmembrane region" description="Helical" evidence="2">
    <location>
        <begin position="372"/>
        <end position="392"/>
    </location>
</feature>
<feature type="transmembrane region" description="Helical" evidence="2">
    <location>
        <begin position="408"/>
        <end position="428"/>
    </location>
</feature>
<feature type="region of interest" description="Disordered" evidence="3">
    <location>
        <begin position="1"/>
        <end position="60"/>
    </location>
</feature>
<feature type="coiled-coil region" evidence="2">
    <location>
        <begin position="176"/>
        <end position="242"/>
    </location>
</feature>
<feature type="short sequence motif" description="Required for magnesium transport activity">
    <location>
        <begin position="392"/>
        <end position="394"/>
    </location>
</feature>
<feature type="compositionally biased region" description="Low complexity" evidence="3">
    <location>
        <begin position="1"/>
        <end position="14"/>
    </location>
</feature>
<feature type="compositionally biased region" description="Low complexity" evidence="3">
    <location>
        <begin position="29"/>
        <end position="54"/>
    </location>
</feature>
<dbReference type="EMBL" id="AP005453">
    <property type="protein sequence ID" value="BAD38112.1"/>
    <property type="molecule type" value="Genomic_DNA"/>
</dbReference>
<dbReference type="EMBL" id="AP008212">
    <property type="protein sequence ID" value="BAF20137.1"/>
    <property type="molecule type" value="Genomic_DNA"/>
</dbReference>
<dbReference type="EMBL" id="AP014962">
    <property type="protein sequence ID" value="BAS98900.1"/>
    <property type="molecule type" value="Genomic_DNA"/>
</dbReference>
<dbReference type="EMBL" id="AK071905">
    <property type="protein sequence ID" value="BAG92749.1"/>
    <property type="molecule type" value="mRNA"/>
</dbReference>
<dbReference type="EMBL" id="AK099209">
    <property type="protein sequence ID" value="BAG93997.1"/>
    <property type="molecule type" value="mRNA"/>
</dbReference>
<dbReference type="RefSeq" id="XP_015643498.1">
    <property type="nucleotide sequence ID" value="XM_015788012.1"/>
</dbReference>
<dbReference type="SMR" id="Q67UQ7"/>
<dbReference type="FunCoup" id="Q67UQ7">
    <property type="interactions" value="135"/>
</dbReference>
<dbReference type="PaxDb" id="39947-Q67UQ7"/>
<dbReference type="EnsemblPlants" id="Os06t0650800-01">
    <property type="protein sequence ID" value="Os06t0650800-01"/>
    <property type="gene ID" value="Os06g0650800"/>
</dbReference>
<dbReference type="EnsemblPlants" id="Os06t0650800-02">
    <property type="protein sequence ID" value="Os06t0650800-02"/>
    <property type="gene ID" value="Os06g0650800"/>
</dbReference>
<dbReference type="Gramene" id="Os06t0650800-01">
    <property type="protein sequence ID" value="Os06t0650800-01"/>
    <property type="gene ID" value="Os06g0650800"/>
</dbReference>
<dbReference type="Gramene" id="Os06t0650800-02">
    <property type="protein sequence ID" value="Os06t0650800-02"/>
    <property type="gene ID" value="Os06g0650800"/>
</dbReference>
<dbReference type="KEGG" id="dosa:Os06g0650800"/>
<dbReference type="eggNOG" id="KOG2662">
    <property type="taxonomic scope" value="Eukaryota"/>
</dbReference>
<dbReference type="HOGENOM" id="CLU_034694_1_1_1"/>
<dbReference type="InParanoid" id="Q67UQ7"/>
<dbReference type="OMA" id="GHCSIER"/>
<dbReference type="OrthoDB" id="10251508at2759"/>
<dbReference type="Proteomes" id="UP000000763">
    <property type="component" value="Chromosome 6"/>
</dbReference>
<dbReference type="Proteomes" id="UP000059680">
    <property type="component" value="Chromosome 6"/>
</dbReference>
<dbReference type="GO" id="GO:0016020">
    <property type="term" value="C:membrane"/>
    <property type="evidence" value="ECO:0007669"/>
    <property type="project" value="UniProtKB-SubCell"/>
</dbReference>
<dbReference type="GO" id="GO:0015095">
    <property type="term" value="F:magnesium ion transmembrane transporter activity"/>
    <property type="evidence" value="ECO:0000318"/>
    <property type="project" value="GO_Central"/>
</dbReference>
<dbReference type="GO" id="GO:0015693">
    <property type="term" value="P:magnesium ion transport"/>
    <property type="evidence" value="ECO:0000318"/>
    <property type="project" value="GO_Central"/>
</dbReference>
<dbReference type="CDD" id="cd12823">
    <property type="entry name" value="Mrs2_Mfm1p-like"/>
    <property type="match status" value="1"/>
</dbReference>
<dbReference type="FunFam" id="1.20.58.340:FF:000009">
    <property type="entry name" value="Magnesium transporter MRS2-1"/>
    <property type="match status" value="1"/>
</dbReference>
<dbReference type="FunFam" id="2.40.128.330:FF:000001">
    <property type="entry name" value="Magnesium transporter MRS2-1"/>
    <property type="match status" value="1"/>
</dbReference>
<dbReference type="Gene3D" id="2.40.128.330">
    <property type="match status" value="1"/>
</dbReference>
<dbReference type="Gene3D" id="1.20.58.340">
    <property type="entry name" value="Magnesium transport protein CorA, transmembrane region"/>
    <property type="match status" value="2"/>
</dbReference>
<dbReference type="InterPro" id="IPR045863">
    <property type="entry name" value="CorA_TM1_TM2"/>
</dbReference>
<dbReference type="InterPro" id="IPR039204">
    <property type="entry name" value="MRS2-like"/>
</dbReference>
<dbReference type="PANTHER" id="PTHR13890:SF26">
    <property type="entry name" value="MAGNESIUM TRANSPORTER MRS2-1"/>
    <property type="match status" value="1"/>
</dbReference>
<dbReference type="PANTHER" id="PTHR13890">
    <property type="entry name" value="RNA SPLICING PROTEIN MRS2, MITOCHONDRIAL"/>
    <property type="match status" value="1"/>
</dbReference>
<dbReference type="Pfam" id="PF22099">
    <property type="entry name" value="MRS2-like"/>
    <property type="match status" value="2"/>
</dbReference>
<dbReference type="SUPFAM" id="SSF144083">
    <property type="entry name" value="Magnesium transport protein CorA, transmembrane region"/>
    <property type="match status" value="1"/>
</dbReference>
<comment type="function">
    <text evidence="1">Magnesium transporter that may mediate the influx of magnesium.</text>
</comment>
<comment type="subcellular location">
    <subcellularLocation>
        <location evidence="1">Membrane</location>
        <topology evidence="1">Multi-pass membrane protein</topology>
    </subcellularLocation>
</comment>
<comment type="similarity">
    <text evidence="4">Belongs to the CorA metal ion transporter (MIT) (TC 1.A.35.5) family.</text>
</comment>
<evidence type="ECO:0000250" key="1"/>
<evidence type="ECO:0000255" key="2"/>
<evidence type="ECO:0000256" key="3">
    <source>
        <dbReference type="SAM" id="MobiDB-lite"/>
    </source>
</evidence>
<evidence type="ECO:0000305" key="4"/>
<protein>
    <recommendedName>
        <fullName>Magnesium transporter MRS2-B</fullName>
    </recommendedName>
</protein>
<organism>
    <name type="scientific">Oryza sativa subsp. japonica</name>
    <name type="common">Rice</name>
    <dbReference type="NCBI Taxonomy" id="39947"/>
    <lineage>
        <taxon>Eukaryota</taxon>
        <taxon>Viridiplantae</taxon>
        <taxon>Streptophyta</taxon>
        <taxon>Embryophyta</taxon>
        <taxon>Tracheophyta</taxon>
        <taxon>Spermatophyta</taxon>
        <taxon>Magnoliopsida</taxon>
        <taxon>Liliopsida</taxon>
        <taxon>Poales</taxon>
        <taxon>Poaceae</taxon>
        <taxon>BOP clade</taxon>
        <taxon>Oryzoideae</taxon>
        <taxon>Oryzeae</taxon>
        <taxon>Oryzinae</taxon>
        <taxon>Oryza</taxon>
        <taxon>Oryza sativa</taxon>
    </lineage>
</organism>